<reference key="1">
    <citation type="submission" date="2007-03" db="EMBL/GenBank/DDBJ databases">
        <title>Sequencing analysis of Aethionema grandiflorum chloroplast DNA.</title>
        <authorList>
            <person name="Hosouchi T."/>
            <person name="Tsuruoka H."/>
            <person name="Kotani H."/>
        </authorList>
    </citation>
    <scope>NUCLEOTIDE SEQUENCE [LARGE SCALE GENOMIC DNA]</scope>
</reference>
<keyword id="KW-0150">Chloroplast</keyword>
<keyword id="KW-0472">Membrane</keyword>
<keyword id="KW-0520">NAD</keyword>
<keyword id="KW-0521">NADP</keyword>
<keyword id="KW-0934">Plastid</keyword>
<keyword id="KW-0618">Plastoquinone</keyword>
<keyword id="KW-0874">Quinone</keyword>
<keyword id="KW-0793">Thylakoid</keyword>
<keyword id="KW-1278">Translocase</keyword>
<keyword id="KW-0812">Transmembrane</keyword>
<keyword id="KW-1133">Transmembrane helix</keyword>
<keyword id="KW-0813">Transport</keyword>
<proteinExistence type="inferred from homology"/>
<sequence>MEHTYQYSWIIPFIPLPVPILLGVGLLLFPTATKNLRRTWSFLSIFLLSIVMIFSLYLSIQQIIISCIHQNVWSWTINNDLSFEFGYFIDPLSCIMVILITTVGIFVLIYSDNYMSHDQGYLRFFAYMGFFNTSMLGLVTSSNLIQIYFFWELVGMCSYLLIGFWFTRPIAANACQKAFVTNRVGDFGLLLGILGLYWVTGSFEFQDLFEIFNNLILNNRVNLLFLTLCAFLFFMGPIAKSAQFPLHVWLPDAMEGPTPISALIHAATMVAAGIFLVARLLPLFIVIPSIMYIISLIGIITILLGATLALAQKDIKRGLAYSTMSQLGYMMLALGMGSYRSALFHLITHAYSKALLFLGSGSIIHSMEALVGYSPDKSQNMILMGGLTKHVPITKTAFLLGTLSLCGIPPLACFWSKDEILNDSLLFSPIFAIIACSTAGLTAFYMFRIYLLTFEGHLNTYFLNYSGKKSSSVYSISLWGKEDGKKINRNFCLVPLLTMNNKKGASFFSKKTYQINNNVRNQTLITVANCALNKKIYYYPHESDNTILFPMLVLLLFTLFIGAIGIPLNQEGFNILSKLFTPSINLLHKNSTNFVDWYEFFRNATFSVSIAFFGIFIAYWLYKPFYSSLLNLTLLNSFQKWSSNPSCWEKLINCVYNWSYNRGYIDTFYKKSLTESIRRLAKQINFFDKRIIDGITNGVGITSFFVGEFTKYIGGSRISSYLFLYLSYVSLFFLFLKILN</sequence>
<dbReference type="EC" id="7.1.1.-"/>
<dbReference type="EMBL" id="AP009367">
    <property type="protein sequence ID" value="BAF49902.1"/>
    <property type="molecule type" value="Genomic_DNA"/>
</dbReference>
<dbReference type="RefSeq" id="YP_001123077.1">
    <property type="nucleotide sequence ID" value="NC_009266.1"/>
</dbReference>
<dbReference type="SMR" id="A4QJP7"/>
<dbReference type="GeneID" id="4962283"/>
<dbReference type="GO" id="GO:0009535">
    <property type="term" value="C:chloroplast thylakoid membrane"/>
    <property type="evidence" value="ECO:0007669"/>
    <property type="project" value="UniProtKB-SubCell"/>
</dbReference>
<dbReference type="GO" id="GO:0008137">
    <property type="term" value="F:NADH dehydrogenase (ubiquinone) activity"/>
    <property type="evidence" value="ECO:0007669"/>
    <property type="project" value="InterPro"/>
</dbReference>
<dbReference type="GO" id="GO:0048038">
    <property type="term" value="F:quinone binding"/>
    <property type="evidence" value="ECO:0007669"/>
    <property type="project" value="UniProtKB-KW"/>
</dbReference>
<dbReference type="GO" id="GO:0042773">
    <property type="term" value="P:ATP synthesis coupled electron transport"/>
    <property type="evidence" value="ECO:0007669"/>
    <property type="project" value="InterPro"/>
</dbReference>
<dbReference type="GO" id="GO:0015990">
    <property type="term" value="P:electron transport coupled proton transport"/>
    <property type="evidence" value="ECO:0007669"/>
    <property type="project" value="TreeGrafter"/>
</dbReference>
<dbReference type="Gene3D" id="1.20.5.2700">
    <property type="match status" value="1"/>
</dbReference>
<dbReference type="InterPro" id="IPR002128">
    <property type="entry name" value="NADH_UbQ_OxRdtase_chlpt_su5_C"/>
</dbReference>
<dbReference type="InterPro" id="IPR018393">
    <property type="entry name" value="NADHpl_OxRdtase_5_subgr"/>
</dbReference>
<dbReference type="InterPro" id="IPR001750">
    <property type="entry name" value="ND/Mrp_TM"/>
</dbReference>
<dbReference type="InterPro" id="IPR003945">
    <property type="entry name" value="NU5C-like"/>
</dbReference>
<dbReference type="InterPro" id="IPR001516">
    <property type="entry name" value="Proton_antipo_N"/>
</dbReference>
<dbReference type="NCBIfam" id="TIGR01974">
    <property type="entry name" value="NDH_I_L"/>
    <property type="match status" value="1"/>
</dbReference>
<dbReference type="NCBIfam" id="NF005141">
    <property type="entry name" value="PRK06590.1"/>
    <property type="match status" value="1"/>
</dbReference>
<dbReference type="PANTHER" id="PTHR42829">
    <property type="entry name" value="NADH-UBIQUINONE OXIDOREDUCTASE CHAIN 5"/>
    <property type="match status" value="1"/>
</dbReference>
<dbReference type="PANTHER" id="PTHR42829:SF2">
    <property type="entry name" value="NADH-UBIQUINONE OXIDOREDUCTASE CHAIN 5"/>
    <property type="match status" value="1"/>
</dbReference>
<dbReference type="Pfam" id="PF01010">
    <property type="entry name" value="Proton_antipo_C"/>
    <property type="match status" value="1"/>
</dbReference>
<dbReference type="Pfam" id="PF00361">
    <property type="entry name" value="Proton_antipo_M"/>
    <property type="match status" value="1"/>
</dbReference>
<dbReference type="Pfam" id="PF00662">
    <property type="entry name" value="Proton_antipo_N"/>
    <property type="match status" value="1"/>
</dbReference>
<dbReference type="PRINTS" id="PR01434">
    <property type="entry name" value="NADHDHGNASE5"/>
</dbReference>
<dbReference type="PRINTS" id="PR01435">
    <property type="entry name" value="NPOXDRDTASE5"/>
</dbReference>
<name>NU5C_AETGR</name>
<accession>A4QJP7</accession>
<evidence type="ECO:0000250" key="1"/>
<evidence type="ECO:0000255" key="2"/>
<evidence type="ECO:0000305" key="3"/>
<protein>
    <recommendedName>
        <fullName>NAD(P)H-quinone oxidoreductase subunit 5, chloroplastic</fullName>
        <ecNumber>7.1.1.-</ecNumber>
    </recommendedName>
    <alternativeName>
        <fullName>NAD(P)H dehydrogenase subunit 5</fullName>
    </alternativeName>
    <alternativeName>
        <fullName>NADH-plastoquinone oxidoreductase subunit 5</fullName>
    </alternativeName>
</protein>
<comment type="function">
    <text evidence="1">NDH shuttles electrons from NAD(P)H:plastoquinone, via FMN and iron-sulfur (Fe-S) centers, to quinones in the photosynthetic chain and possibly in a chloroplast respiratory chain. The immediate electron acceptor for the enzyme in this species is believed to be plastoquinone. Couples the redox reaction to proton translocation, and thus conserves the redox energy in a proton gradient (By similarity).</text>
</comment>
<comment type="catalytic activity">
    <reaction>
        <text>a plastoquinone + NADH + (n+1) H(+)(in) = a plastoquinol + NAD(+) + n H(+)(out)</text>
        <dbReference type="Rhea" id="RHEA:42608"/>
        <dbReference type="Rhea" id="RHEA-COMP:9561"/>
        <dbReference type="Rhea" id="RHEA-COMP:9562"/>
        <dbReference type="ChEBI" id="CHEBI:15378"/>
        <dbReference type="ChEBI" id="CHEBI:17757"/>
        <dbReference type="ChEBI" id="CHEBI:57540"/>
        <dbReference type="ChEBI" id="CHEBI:57945"/>
        <dbReference type="ChEBI" id="CHEBI:62192"/>
    </reaction>
</comment>
<comment type="catalytic activity">
    <reaction>
        <text>a plastoquinone + NADPH + (n+1) H(+)(in) = a plastoquinol + NADP(+) + n H(+)(out)</text>
        <dbReference type="Rhea" id="RHEA:42612"/>
        <dbReference type="Rhea" id="RHEA-COMP:9561"/>
        <dbReference type="Rhea" id="RHEA-COMP:9562"/>
        <dbReference type="ChEBI" id="CHEBI:15378"/>
        <dbReference type="ChEBI" id="CHEBI:17757"/>
        <dbReference type="ChEBI" id="CHEBI:57783"/>
        <dbReference type="ChEBI" id="CHEBI:58349"/>
        <dbReference type="ChEBI" id="CHEBI:62192"/>
    </reaction>
</comment>
<comment type="subunit">
    <text evidence="1">NDH is composed of at least 16 different subunits, 5 of which are encoded in the nucleus.</text>
</comment>
<comment type="subcellular location">
    <subcellularLocation>
        <location evidence="1">Plastid</location>
        <location evidence="1">Chloroplast thylakoid membrane</location>
        <topology evidence="1">Multi-pass membrane protein</topology>
    </subcellularLocation>
</comment>
<comment type="similarity">
    <text evidence="3">Belongs to the complex I subunit 5 family.</text>
</comment>
<geneLocation type="chloroplast"/>
<feature type="chain" id="PRO_0000360907" description="NAD(P)H-quinone oxidoreductase subunit 5, chloroplastic">
    <location>
        <begin position="1"/>
        <end position="740"/>
    </location>
</feature>
<feature type="transmembrane region" description="Helical" evidence="2">
    <location>
        <begin position="9"/>
        <end position="29"/>
    </location>
</feature>
<feature type="transmembrane region" description="Helical" evidence="2">
    <location>
        <begin position="40"/>
        <end position="60"/>
    </location>
</feature>
<feature type="transmembrane region" description="Helical" evidence="2">
    <location>
        <begin position="89"/>
        <end position="109"/>
    </location>
</feature>
<feature type="transmembrane region" description="Helical" evidence="2">
    <location>
        <begin position="125"/>
        <end position="145"/>
    </location>
</feature>
<feature type="transmembrane region" description="Helical" evidence="2">
    <location>
        <begin position="147"/>
        <end position="167"/>
    </location>
</feature>
<feature type="transmembrane region" description="Helical" evidence="2">
    <location>
        <begin position="185"/>
        <end position="205"/>
    </location>
</feature>
<feature type="transmembrane region" description="Helical" evidence="2">
    <location>
        <begin position="221"/>
        <end position="241"/>
    </location>
</feature>
<feature type="transmembrane region" description="Helical" evidence="2">
    <location>
        <begin position="258"/>
        <end position="278"/>
    </location>
</feature>
<feature type="transmembrane region" description="Helical" evidence="2">
    <location>
        <begin position="283"/>
        <end position="303"/>
    </location>
</feature>
<feature type="transmembrane region" description="Helical" evidence="2">
    <location>
        <begin position="327"/>
        <end position="347"/>
    </location>
</feature>
<feature type="transmembrane region" description="Helical" evidence="2">
    <location>
        <begin position="354"/>
        <end position="374"/>
    </location>
</feature>
<feature type="transmembrane region" description="Helical" evidence="2">
    <location>
        <begin position="396"/>
        <end position="416"/>
    </location>
</feature>
<feature type="transmembrane region" description="Helical" evidence="2">
    <location>
        <begin position="425"/>
        <end position="445"/>
    </location>
</feature>
<feature type="transmembrane region" description="Helical" evidence="2">
    <location>
        <begin position="547"/>
        <end position="567"/>
    </location>
</feature>
<feature type="transmembrane region" description="Helical" evidence="2">
    <location>
        <begin position="606"/>
        <end position="626"/>
    </location>
</feature>
<feature type="transmembrane region" description="Helical" evidence="2">
    <location>
        <begin position="718"/>
        <end position="738"/>
    </location>
</feature>
<organism>
    <name type="scientific">Aethionema grandiflorum</name>
    <name type="common">Persian stone-cress</name>
    <dbReference type="NCBI Taxonomy" id="72657"/>
    <lineage>
        <taxon>Eukaryota</taxon>
        <taxon>Viridiplantae</taxon>
        <taxon>Streptophyta</taxon>
        <taxon>Embryophyta</taxon>
        <taxon>Tracheophyta</taxon>
        <taxon>Spermatophyta</taxon>
        <taxon>Magnoliopsida</taxon>
        <taxon>eudicotyledons</taxon>
        <taxon>Gunneridae</taxon>
        <taxon>Pentapetalae</taxon>
        <taxon>rosids</taxon>
        <taxon>malvids</taxon>
        <taxon>Brassicales</taxon>
        <taxon>Brassicaceae</taxon>
        <taxon>Aethionemeae</taxon>
        <taxon>Aethionema</taxon>
    </lineage>
</organism>
<gene>
    <name type="primary">ndhF</name>
</gene>